<name>OTC_CAMHC</name>
<feature type="chain" id="PRO_1000065083" description="Ornithine carbamoyltransferase">
    <location>
        <begin position="1"/>
        <end position="306"/>
    </location>
</feature>
<feature type="binding site" evidence="2">
    <location>
        <begin position="51"/>
        <end position="54"/>
    </location>
    <ligand>
        <name>carbamoyl phosphate</name>
        <dbReference type="ChEBI" id="CHEBI:58228"/>
    </ligand>
</feature>
<feature type="binding site" evidence="2">
    <location>
        <position position="78"/>
    </location>
    <ligand>
        <name>carbamoyl phosphate</name>
        <dbReference type="ChEBI" id="CHEBI:58228"/>
    </ligand>
</feature>
<feature type="binding site" evidence="2">
    <location>
        <position position="102"/>
    </location>
    <ligand>
        <name>carbamoyl phosphate</name>
        <dbReference type="ChEBI" id="CHEBI:58228"/>
    </ligand>
</feature>
<feature type="binding site" evidence="2">
    <location>
        <begin position="129"/>
        <end position="132"/>
    </location>
    <ligand>
        <name>carbamoyl phosphate</name>
        <dbReference type="ChEBI" id="CHEBI:58228"/>
    </ligand>
</feature>
<feature type="binding site" evidence="2">
    <location>
        <position position="157"/>
    </location>
    <ligand>
        <name>L-ornithine</name>
        <dbReference type="ChEBI" id="CHEBI:46911"/>
    </ligand>
</feature>
<feature type="binding site" evidence="2">
    <location>
        <position position="221"/>
    </location>
    <ligand>
        <name>L-ornithine</name>
        <dbReference type="ChEBI" id="CHEBI:46911"/>
    </ligand>
</feature>
<feature type="binding site" evidence="2">
    <location>
        <begin position="225"/>
        <end position="226"/>
    </location>
    <ligand>
        <name>L-ornithine</name>
        <dbReference type="ChEBI" id="CHEBI:46911"/>
    </ligand>
</feature>
<feature type="binding site" evidence="2">
    <location>
        <begin position="261"/>
        <end position="262"/>
    </location>
    <ligand>
        <name>carbamoyl phosphate</name>
        <dbReference type="ChEBI" id="CHEBI:58228"/>
    </ligand>
</feature>
<feature type="binding site" evidence="2">
    <location>
        <position position="289"/>
    </location>
    <ligand>
        <name>carbamoyl phosphate</name>
        <dbReference type="ChEBI" id="CHEBI:58228"/>
    </ligand>
</feature>
<organism>
    <name type="scientific">Campylobacter hominis (strain ATCC BAA-381 / DSM 21671 / CCUG 45161 / LMG 19568 / NCTC 13146 / CH001A)</name>
    <dbReference type="NCBI Taxonomy" id="360107"/>
    <lineage>
        <taxon>Bacteria</taxon>
        <taxon>Pseudomonadati</taxon>
        <taxon>Campylobacterota</taxon>
        <taxon>Epsilonproteobacteria</taxon>
        <taxon>Campylobacterales</taxon>
        <taxon>Campylobacteraceae</taxon>
        <taxon>Campylobacter</taxon>
    </lineage>
</organism>
<keyword id="KW-0028">Amino-acid biosynthesis</keyword>
<keyword id="KW-0055">Arginine biosynthesis</keyword>
<keyword id="KW-0963">Cytoplasm</keyword>
<keyword id="KW-1185">Reference proteome</keyword>
<keyword id="KW-0808">Transferase</keyword>
<protein>
    <recommendedName>
        <fullName evidence="2">Ornithine carbamoyltransferase</fullName>
        <shortName evidence="2">OTCase</shortName>
        <ecNumber evidence="2">2.1.3.3</ecNumber>
    </recommendedName>
</protein>
<comment type="function">
    <text evidence="1">Reversibly catalyzes the transfer of the carbamoyl group from carbamoyl phosphate (CP) to the N(epsilon) atom of ornithine (ORN) to produce L-citrulline.</text>
</comment>
<comment type="catalytic activity">
    <reaction evidence="2">
        <text>carbamoyl phosphate + L-ornithine = L-citrulline + phosphate + H(+)</text>
        <dbReference type="Rhea" id="RHEA:19513"/>
        <dbReference type="ChEBI" id="CHEBI:15378"/>
        <dbReference type="ChEBI" id="CHEBI:43474"/>
        <dbReference type="ChEBI" id="CHEBI:46911"/>
        <dbReference type="ChEBI" id="CHEBI:57743"/>
        <dbReference type="ChEBI" id="CHEBI:58228"/>
        <dbReference type="EC" id="2.1.3.3"/>
    </reaction>
</comment>
<comment type="pathway">
    <text evidence="2">Amino-acid biosynthesis; L-arginine biosynthesis; L-arginine from L-ornithine and carbamoyl phosphate: step 1/3.</text>
</comment>
<comment type="subcellular location">
    <subcellularLocation>
        <location evidence="2">Cytoplasm</location>
    </subcellularLocation>
</comment>
<comment type="similarity">
    <text evidence="2">Belongs to the aspartate/ornithine carbamoyltransferase superfamily. OTCase family.</text>
</comment>
<dbReference type="EC" id="2.1.3.3" evidence="2"/>
<dbReference type="EMBL" id="CP000776">
    <property type="protein sequence ID" value="ABS52519.1"/>
    <property type="molecule type" value="Genomic_DNA"/>
</dbReference>
<dbReference type="RefSeq" id="WP_012109515.1">
    <property type="nucleotide sequence ID" value="NC_009714.1"/>
</dbReference>
<dbReference type="SMR" id="A7I3W8"/>
<dbReference type="STRING" id="360107.CHAB381_1697"/>
<dbReference type="KEGG" id="cha:CHAB381_1697"/>
<dbReference type="eggNOG" id="COG0078">
    <property type="taxonomic scope" value="Bacteria"/>
</dbReference>
<dbReference type="HOGENOM" id="CLU_043846_3_2_7"/>
<dbReference type="OrthoDB" id="9802587at2"/>
<dbReference type="UniPathway" id="UPA00068">
    <property type="reaction ID" value="UER00112"/>
</dbReference>
<dbReference type="Proteomes" id="UP000002407">
    <property type="component" value="Chromosome"/>
</dbReference>
<dbReference type="GO" id="GO:0005737">
    <property type="term" value="C:cytoplasm"/>
    <property type="evidence" value="ECO:0007669"/>
    <property type="project" value="UniProtKB-SubCell"/>
</dbReference>
<dbReference type="GO" id="GO:0016597">
    <property type="term" value="F:amino acid binding"/>
    <property type="evidence" value="ECO:0007669"/>
    <property type="project" value="InterPro"/>
</dbReference>
<dbReference type="GO" id="GO:0004585">
    <property type="term" value="F:ornithine carbamoyltransferase activity"/>
    <property type="evidence" value="ECO:0007669"/>
    <property type="project" value="UniProtKB-UniRule"/>
</dbReference>
<dbReference type="GO" id="GO:0042450">
    <property type="term" value="P:arginine biosynthetic process via ornithine"/>
    <property type="evidence" value="ECO:0007669"/>
    <property type="project" value="TreeGrafter"/>
</dbReference>
<dbReference type="GO" id="GO:0019240">
    <property type="term" value="P:citrulline biosynthetic process"/>
    <property type="evidence" value="ECO:0007669"/>
    <property type="project" value="TreeGrafter"/>
</dbReference>
<dbReference type="GO" id="GO:0006526">
    <property type="term" value="P:L-arginine biosynthetic process"/>
    <property type="evidence" value="ECO:0007669"/>
    <property type="project" value="UniProtKB-UniRule"/>
</dbReference>
<dbReference type="FunFam" id="3.40.50.1370:FF:000008">
    <property type="entry name" value="Ornithine carbamoyltransferase"/>
    <property type="match status" value="1"/>
</dbReference>
<dbReference type="Gene3D" id="3.40.50.1370">
    <property type="entry name" value="Aspartate/ornithine carbamoyltransferase"/>
    <property type="match status" value="2"/>
</dbReference>
<dbReference type="HAMAP" id="MF_01109">
    <property type="entry name" value="OTCase"/>
    <property type="match status" value="1"/>
</dbReference>
<dbReference type="InterPro" id="IPR006132">
    <property type="entry name" value="Asp/Orn_carbamoyltranf_P-bd"/>
</dbReference>
<dbReference type="InterPro" id="IPR006130">
    <property type="entry name" value="Asp/Orn_carbamoylTrfase"/>
</dbReference>
<dbReference type="InterPro" id="IPR036901">
    <property type="entry name" value="Asp/Orn_carbamoylTrfase_sf"/>
</dbReference>
<dbReference type="InterPro" id="IPR006131">
    <property type="entry name" value="Asp_carbamoyltransf_Asp/Orn-bd"/>
</dbReference>
<dbReference type="InterPro" id="IPR002292">
    <property type="entry name" value="Orn/put_carbamltrans"/>
</dbReference>
<dbReference type="InterPro" id="IPR024904">
    <property type="entry name" value="OTCase_ArgI"/>
</dbReference>
<dbReference type="NCBIfam" id="TIGR00658">
    <property type="entry name" value="orni_carb_tr"/>
    <property type="match status" value="1"/>
</dbReference>
<dbReference type="NCBIfam" id="NF001986">
    <property type="entry name" value="PRK00779.1"/>
    <property type="match status" value="1"/>
</dbReference>
<dbReference type="PANTHER" id="PTHR45753">
    <property type="entry name" value="ORNITHINE CARBAMOYLTRANSFERASE, MITOCHONDRIAL"/>
    <property type="match status" value="1"/>
</dbReference>
<dbReference type="PANTHER" id="PTHR45753:SF3">
    <property type="entry name" value="ORNITHINE TRANSCARBAMYLASE, MITOCHONDRIAL"/>
    <property type="match status" value="1"/>
</dbReference>
<dbReference type="Pfam" id="PF00185">
    <property type="entry name" value="OTCace"/>
    <property type="match status" value="1"/>
</dbReference>
<dbReference type="Pfam" id="PF02729">
    <property type="entry name" value="OTCace_N"/>
    <property type="match status" value="1"/>
</dbReference>
<dbReference type="PRINTS" id="PR00100">
    <property type="entry name" value="AOTCASE"/>
</dbReference>
<dbReference type="PRINTS" id="PR00102">
    <property type="entry name" value="OTCASE"/>
</dbReference>
<dbReference type="SUPFAM" id="SSF53671">
    <property type="entry name" value="Aspartate/ornithine carbamoyltransferase"/>
    <property type="match status" value="1"/>
</dbReference>
<dbReference type="PROSITE" id="PS00097">
    <property type="entry name" value="CARBAMOYLTRANSFERASE"/>
    <property type="match status" value="1"/>
</dbReference>
<reference key="1">
    <citation type="submission" date="2007-07" db="EMBL/GenBank/DDBJ databases">
        <title>Complete genome sequence of Campylobacter hominis ATCC BAA-381, a commensal isolated from the human gastrointestinal tract.</title>
        <authorList>
            <person name="Fouts D.E."/>
            <person name="Mongodin E.F."/>
            <person name="Puiu D."/>
            <person name="Sebastian Y."/>
            <person name="Miller W.G."/>
            <person name="Mandrell R.E."/>
            <person name="Nelson K.E."/>
        </authorList>
    </citation>
    <scope>NUCLEOTIDE SEQUENCE [LARGE SCALE GENOMIC DNA]</scope>
    <source>
        <strain>ATCC BAA-381 / DSM 21671 / CCUG 45161 / LMG 19568 / NCTC 13146 / CH001A</strain>
    </source>
</reference>
<accession>A7I3W8</accession>
<proteinExistence type="inferred from homology"/>
<sequence>MRHFLTLNDFSKAEILEILSLADKIKKETKNKKYEPYLKNQTLAMIFEKSSTRTRVSFETGIYQLGGQGLFLSSRDIQLGRGEPIKDTARVISSMVDMAMLRVYKQSDLVEFAKFSSVPVINGLSDDLHPVQLMADYMTIKEIANGETIAYIGDGNNMSNSWLMLASILGLELHIATPKGYEPNKNFINIAKENAKISGAKILLTHNPKEAIEGANVVATDTWISMGQEDEKERKVKDFESFCVNKNLMSLACKDAILLHCLPAYRGYEVSDKVFESHARDIFLEAENRLHAQKGIMVWLDAHRND</sequence>
<gene>
    <name evidence="2" type="primary">argF</name>
    <name type="ordered locus">CHAB381_1697</name>
</gene>
<evidence type="ECO:0000250" key="1"/>
<evidence type="ECO:0000255" key="2">
    <source>
        <dbReference type="HAMAP-Rule" id="MF_01109"/>
    </source>
</evidence>